<proteinExistence type="evidence at protein level"/>
<feature type="chain" id="PRO_0000198644" description="M-phase inducer phosphatase 2">
    <location>
        <begin position="1"/>
        <end position="580"/>
    </location>
</feature>
<feature type="domain" description="Rhodanese" evidence="2">
    <location>
        <begin position="431"/>
        <end position="538"/>
    </location>
</feature>
<feature type="region of interest" description="Disordered" evidence="3">
    <location>
        <begin position="1"/>
        <end position="24"/>
    </location>
</feature>
<feature type="region of interest" description="Disordered" evidence="3">
    <location>
        <begin position="89"/>
        <end position="117"/>
    </location>
</feature>
<feature type="region of interest" description="Disordered" evidence="3">
    <location>
        <begin position="165"/>
        <end position="196"/>
    </location>
</feature>
<feature type="region of interest" description="Disordered" evidence="3">
    <location>
        <begin position="331"/>
        <end position="370"/>
    </location>
</feature>
<feature type="compositionally biased region" description="Low complexity" evidence="3">
    <location>
        <begin position="89"/>
        <end position="107"/>
    </location>
</feature>
<feature type="compositionally biased region" description="Basic and acidic residues" evidence="3">
    <location>
        <begin position="334"/>
        <end position="344"/>
    </location>
</feature>
<feature type="active site">
    <location>
        <position position="487"/>
    </location>
</feature>
<feature type="modified residue" description="Phosphoserine" evidence="1">
    <location>
        <position position="42"/>
    </location>
</feature>
<feature type="modified residue" description="Phosphoserine; by MELK" evidence="10">
    <location>
        <position position="169"/>
    </location>
</feature>
<feature type="modified residue" description="Phosphoserine" evidence="20 21">
    <location>
        <position position="249"/>
    </location>
</feature>
<feature type="modified residue" description="Phosphoserine; by MELK and MAPK14" evidence="4 5 9 21">
    <location>
        <position position="323"/>
    </location>
</feature>
<feature type="modified residue" description="Phosphoserine; by AURKA" evidence="6 21">
    <location>
        <position position="353"/>
    </location>
</feature>
<feature type="modified residue" description="Phosphoserine; by BRSK1 and MAPK14" evidence="4 7 21">
    <location>
        <position position="375"/>
    </location>
</feature>
<feature type="modified residue" description="Phosphoserine" evidence="21">
    <location>
        <position position="470"/>
    </location>
</feature>
<feature type="modified residue" description="Phosphoserine" evidence="21">
    <location>
        <position position="563"/>
    </location>
</feature>
<feature type="splice variant" id="VSP_000861" description="In isoform 1 and isoform 4." evidence="15 16">
    <location>
        <begin position="68"/>
        <end position="81"/>
    </location>
</feature>
<feature type="splice variant" id="VSP_000862" description="In isoform 2." evidence="17">
    <location>
        <begin position="154"/>
        <end position="194"/>
    </location>
</feature>
<feature type="splice variant" id="VSP_012587" description="In isoform 4." evidence="18">
    <original>N</original>
    <variation>NVRFWKAGVGALREEEGACWGGSLACEDPPLPSWLQ</variation>
    <location>
        <position position="194"/>
    </location>
</feature>
<feature type="sequence variant" id="VAR_020933" description="In dbSNP:rs11570019." evidence="14">
    <original>E</original>
    <variation>K</variation>
    <location>
        <position position="548"/>
    </location>
</feature>
<feature type="sequence conflict" description="In Ref. 2; AAB21139." evidence="18" ref="2">
    <original>S</original>
    <variation>D</variation>
    <location>
        <position position="575"/>
    </location>
</feature>
<feature type="strand" evidence="23">
    <location>
        <begin position="396"/>
        <end position="399"/>
    </location>
</feature>
<feature type="helix" evidence="23">
    <location>
        <begin position="417"/>
        <end position="424"/>
    </location>
</feature>
<feature type="turn" evidence="23">
    <location>
        <begin position="425"/>
        <end position="431"/>
    </location>
</feature>
<feature type="strand" evidence="23">
    <location>
        <begin position="432"/>
        <end position="439"/>
    </location>
</feature>
<feature type="helix" evidence="23">
    <location>
        <begin position="443"/>
        <end position="447"/>
    </location>
</feature>
<feature type="helix" evidence="23">
    <location>
        <begin position="460"/>
        <end position="468"/>
    </location>
</feature>
<feature type="turn" evidence="23">
    <location>
        <begin position="469"/>
        <end position="471"/>
    </location>
</feature>
<feature type="strand" evidence="23">
    <location>
        <begin position="479"/>
        <end position="486"/>
    </location>
</feature>
<feature type="strand" evidence="23">
    <location>
        <begin position="488"/>
        <end position="492"/>
    </location>
</feature>
<feature type="helix" evidence="23">
    <location>
        <begin position="493"/>
        <end position="508"/>
    </location>
</feature>
<feature type="strand" evidence="23">
    <location>
        <begin position="519"/>
        <end position="522"/>
    </location>
</feature>
<feature type="helix" evidence="23">
    <location>
        <begin position="525"/>
        <end position="532"/>
    </location>
</feature>
<feature type="helix" evidence="23">
    <location>
        <begin position="534"/>
        <end position="536"/>
    </location>
</feature>
<feature type="strand" evidence="23">
    <location>
        <begin position="537"/>
        <end position="540"/>
    </location>
</feature>
<feature type="helix" evidence="22">
    <location>
        <begin position="548"/>
        <end position="550"/>
    </location>
</feature>
<feature type="helix" evidence="23">
    <location>
        <begin position="551"/>
        <end position="558"/>
    </location>
</feature>
<name>MPIP2_HUMAN</name>
<accession>P30305</accession>
<accession>D3DVY1</accession>
<accession>D3DVY2</accession>
<accession>D3DVY3</accession>
<accession>D3DVY4</accession>
<accession>O43551</accession>
<accession>Q13971</accession>
<accession>Q5JX77</accession>
<accession>Q6RSS1</accession>
<accession>Q9BRA6</accession>
<gene>
    <name type="primary">CDC25B</name>
    <name type="synonym">CDC25HU2</name>
</gene>
<protein>
    <recommendedName>
        <fullName>M-phase inducer phosphatase 2</fullName>
        <ecNumber evidence="19">3.1.3.48</ecNumber>
    </recommendedName>
    <alternativeName>
        <fullName>Dual specificity phosphatase Cdc25B</fullName>
    </alternativeName>
</protein>
<keyword id="KW-0002">3D-structure</keyword>
<keyword id="KW-0025">Alternative splicing</keyword>
<keyword id="KW-0131">Cell cycle</keyword>
<keyword id="KW-0132">Cell division</keyword>
<keyword id="KW-0963">Cytoplasm</keyword>
<keyword id="KW-0206">Cytoskeleton</keyword>
<keyword id="KW-0378">Hydrolase</keyword>
<keyword id="KW-0498">Mitosis</keyword>
<keyword id="KW-0597">Phosphoprotein</keyword>
<keyword id="KW-0904">Protein phosphatase</keyword>
<keyword id="KW-1267">Proteomics identification</keyword>
<keyword id="KW-1185">Reference proteome</keyword>
<reference key="1">
    <citation type="journal article" date="1991" name="Cell">
        <title>Specific activation of cdc25 tyrosine phosphatases by B-type cyclins: evidence for multiple roles of mitotic cyclins.</title>
        <authorList>
            <person name="Galaktionov K.I."/>
            <person name="Beach D."/>
        </authorList>
    </citation>
    <scope>NUCLEOTIDE SEQUENCE [MRNA] (ISOFORM 1)</scope>
    <scope>FUNCTION</scope>
    <scope>ACTIVITY REGULATION</scope>
</reference>
<reference key="2">
    <citation type="journal article" date="1991" name="New Biol.">
        <title>An additional homolog of the fission yeast cdc25+ gene occurs in humans and is highly expressed in some cancer cells.</title>
        <authorList>
            <person name="Nagata A."/>
            <person name="Igarashi M."/>
            <person name="Jinno S."/>
            <person name="Suto K."/>
            <person name="Okayama H."/>
        </authorList>
    </citation>
    <scope>NUCLEOTIDE SEQUENCE [MRNA] (ISOFORM 1)</scope>
</reference>
<reference key="3">
    <citation type="journal article" date="1997" name="Oncogene">
        <title>Alternative splicing of the human CDC25B tyrosine phosphatase. Possible implications for growth control?</title>
        <authorList>
            <person name="Baldin V."/>
            <person name="Cans C."/>
            <person name="Superti-Furga G."/>
            <person name="Docommun B."/>
        </authorList>
    </citation>
    <scope>NUCLEOTIDE SEQUENCE [GENOMIC DNA / MRNA] (ISOFORMS 2 AND 3)</scope>
</reference>
<reference key="4">
    <citation type="submission" date="2003-12" db="EMBL/GenBank/DDBJ databases">
        <authorList>
            <consortium name="NIEHS SNPs program"/>
        </authorList>
    </citation>
    <scope>NUCLEOTIDE SEQUENCE [GENOMIC DNA]</scope>
    <scope>VARIANT LYS-548</scope>
</reference>
<reference key="5">
    <citation type="journal article" date="2001" name="Nature">
        <title>The DNA sequence and comparative analysis of human chromosome 20.</title>
        <authorList>
            <person name="Deloukas P."/>
            <person name="Matthews L.H."/>
            <person name="Ashurst J.L."/>
            <person name="Burton J."/>
            <person name="Gilbert J.G.R."/>
            <person name="Jones M."/>
            <person name="Stavrides G."/>
            <person name="Almeida J.P."/>
            <person name="Babbage A.K."/>
            <person name="Bagguley C.L."/>
            <person name="Bailey J."/>
            <person name="Barlow K.F."/>
            <person name="Bates K.N."/>
            <person name="Beard L.M."/>
            <person name="Beare D.M."/>
            <person name="Beasley O.P."/>
            <person name="Bird C.P."/>
            <person name="Blakey S.E."/>
            <person name="Bridgeman A.M."/>
            <person name="Brown A.J."/>
            <person name="Buck D."/>
            <person name="Burrill W.D."/>
            <person name="Butler A.P."/>
            <person name="Carder C."/>
            <person name="Carter N.P."/>
            <person name="Chapman J.C."/>
            <person name="Clamp M."/>
            <person name="Clark G."/>
            <person name="Clark L.N."/>
            <person name="Clark S.Y."/>
            <person name="Clee C.M."/>
            <person name="Clegg S."/>
            <person name="Cobley V.E."/>
            <person name="Collier R.E."/>
            <person name="Connor R.E."/>
            <person name="Corby N.R."/>
            <person name="Coulson A."/>
            <person name="Coville G.J."/>
            <person name="Deadman R."/>
            <person name="Dhami P.D."/>
            <person name="Dunn M."/>
            <person name="Ellington A.G."/>
            <person name="Frankland J.A."/>
            <person name="Fraser A."/>
            <person name="French L."/>
            <person name="Garner P."/>
            <person name="Grafham D.V."/>
            <person name="Griffiths C."/>
            <person name="Griffiths M.N.D."/>
            <person name="Gwilliam R."/>
            <person name="Hall R.E."/>
            <person name="Hammond S."/>
            <person name="Harley J.L."/>
            <person name="Heath P.D."/>
            <person name="Ho S."/>
            <person name="Holden J.L."/>
            <person name="Howden P.J."/>
            <person name="Huckle E."/>
            <person name="Hunt A.R."/>
            <person name="Hunt S.E."/>
            <person name="Jekosch K."/>
            <person name="Johnson C.M."/>
            <person name="Johnson D."/>
            <person name="Kay M.P."/>
            <person name="Kimberley A.M."/>
            <person name="King A."/>
            <person name="Knights A."/>
            <person name="Laird G.K."/>
            <person name="Lawlor S."/>
            <person name="Lehvaeslaiho M.H."/>
            <person name="Leversha M.A."/>
            <person name="Lloyd C."/>
            <person name="Lloyd D.M."/>
            <person name="Lovell J.D."/>
            <person name="Marsh V.L."/>
            <person name="Martin S.L."/>
            <person name="McConnachie L.J."/>
            <person name="McLay K."/>
            <person name="McMurray A.A."/>
            <person name="Milne S.A."/>
            <person name="Mistry D."/>
            <person name="Moore M.J.F."/>
            <person name="Mullikin J.C."/>
            <person name="Nickerson T."/>
            <person name="Oliver K."/>
            <person name="Parker A."/>
            <person name="Patel R."/>
            <person name="Pearce T.A.V."/>
            <person name="Peck A.I."/>
            <person name="Phillimore B.J.C.T."/>
            <person name="Prathalingam S.R."/>
            <person name="Plumb R.W."/>
            <person name="Ramsay H."/>
            <person name="Rice C.M."/>
            <person name="Ross M.T."/>
            <person name="Scott C.E."/>
            <person name="Sehra H.K."/>
            <person name="Shownkeen R."/>
            <person name="Sims S."/>
            <person name="Skuce C.D."/>
            <person name="Smith M.L."/>
            <person name="Soderlund C."/>
            <person name="Steward C.A."/>
            <person name="Sulston J.E."/>
            <person name="Swann R.M."/>
            <person name="Sycamore N."/>
            <person name="Taylor R."/>
            <person name="Tee L."/>
            <person name="Thomas D.W."/>
            <person name="Thorpe A."/>
            <person name="Tracey A."/>
            <person name="Tromans A.C."/>
            <person name="Vaudin M."/>
            <person name="Wall M."/>
            <person name="Wallis J.M."/>
            <person name="Whitehead S.L."/>
            <person name="Whittaker P."/>
            <person name="Willey D.L."/>
            <person name="Williams L."/>
            <person name="Williams S.A."/>
            <person name="Wilming L."/>
            <person name="Wray P.W."/>
            <person name="Hubbard T."/>
            <person name="Durbin R.M."/>
            <person name="Bentley D.R."/>
            <person name="Beck S."/>
            <person name="Rogers J."/>
        </authorList>
    </citation>
    <scope>NUCLEOTIDE SEQUENCE [LARGE SCALE GENOMIC DNA]</scope>
</reference>
<reference key="6">
    <citation type="submission" date="2005-09" db="EMBL/GenBank/DDBJ databases">
        <authorList>
            <person name="Mural R.J."/>
            <person name="Istrail S."/>
            <person name="Sutton G.G."/>
            <person name="Florea L."/>
            <person name="Halpern A.L."/>
            <person name="Mobarry C.M."/>
            <person name="Lippert R."/>
            <person name="Walenz B."/>
            <person name="Shatkay H."/>
            <person name="Dew I."/>
            <person name="Miller J.R."/>
            <person name="Flanigan M.J."/>
            <person name="Edwards N.J."/>
            <person name="Bolanos R."/>
            <person name="Fasulo D."/>
            <person name="Halldorsson B.V."/>
            <person name="Hannenhalli S."/>
            <person name="Turner R."/>
            <person name="Yooseph S."/>
            <person name="Lu F."/>
            <person name="Nusskern D.R."/>
            <person name="Shue B.C."/>
            <person name="Zheng X.H."/>
            <person name="Zhong F."/>
            <person name="Delcher A.L."/>
            <person name="Huson D.H."/>
            <person name="Kravitz S.A."/>
            <person name="Mouchard L."/>
            <person name="Reinert K."/>
            <person name="Remington K.A."/>
            <person name="Clark A.G."/>
            <person name="Waterman M.S."/>
            <person name="Eichler E.E."/>
            <person name="Adams M.D."/>
            <person name="Hunkapiller M.W."/>
            <person name="Myers E.W."/>
            <person name="Venter J.C."/>
        </authorList>
    </citation>
    <scope>NUCLEOTIDE SEQUENCE [LARGE SCALE GENOMIC DNA]</scope>
</reference>
<reference key="7">
    <citation type="journal article" date="2004" name="Genome Res.">
        <title>The status, quality, and expansion of the NIH full-length cDNA project: the Mammalian Gene Collection (MGC).</title>
        <authorList>
            <consortium name="The MGC Project Team"/>
        </authorList>
    </citation>
    <scope>NUCLEOTIDE SEQUENCE [LARGE SCALE MRNA] (ISOFORM 3)</scope>
    <source>
        <tissue>Brain</tissue>
    </source>
</reference>
<reference key="8">
    <citation type="submission" date="1997-11" db="EMBL/GenBank/DDBJ databases">
        <title>Alternative splicing of cdc25B.</title>
        <authorList>
            <person name="McCormack A.K."/>
            <person name="DeSouza C.C.P.C."/>
            <person name="Tonks I.D."/>
            <person name="Clark J.M."/>
            <person name="Forrest A.R.R."/>
            <person name="Hayward N.K."/>
            <person name="Ellem K.A.O."/>
            <person name="Gabrielli B.G."/>
        </authorList>
    </citation>
    <scope>NUCLEOTIDE SEQUENCE [GENOMIC DNA] OF 56-352 (ISOFORMS 2 AND 3)</scope>
</reference>
<reference key="9">
    <citation type="journal article" date="2001" name="Nature">
        <title>Initiation of a G2/M checkpoint after ultraviolet radiation requires p38 kinase.</title>
        <authorList>
            <person name="Bulavin D.V."/>
            <person name="Higashimoto Y."/>
            <person name="Popoff I.J."/>
            <person name="Gaarde W.A."/>
            <person name="Basrur V."/>
            <person name="Potapova O."/>
            <person name="Appella E."/>
            <person name="Fornace A.J. Jr."/>
        </authorList>
    </citation>
    <scope>PHOSPHORYLATION AT SER-323 AND SER-375</scope>
    <scope>INTERACTION WITH MAPK14 AND 14-3-3 PROTEINS</scope>
</reference>
<reference key="10">
    <citation type="journal article" date="2002" name="Oncogene">
        <title>Human pEg3 kinase associates with and phosphorylates CDC25B phosphatase: a potential role for pEg3 in cell cycle regulation.</title>
        <authorList>
            <person name="Davezac N."/>
            <person name="Baldin V."/>
            <person name="Blot J."/>
            <person name="Ducommun B."/>
            <person name="Tassan J.P."/>
        </authorList>
    </citation>
    <scope>PHOSPHORYLATION AT SER-323</scope>
</reference>
<reference key="11">
    <citation type="journal article" date="2004" name="J. Biol. Chem.">
        <title>Human SAD1 kinase is involved in UV-induced DNA damage checkpoint function.</title>
        <authorList>
            <person name="Lu R."/>
            <person name="Niida H."/>
            <person name="Nakanishi M."/>
        </authorList>
    </citation>
    <scope>PHOSPHORYLATION AT SER-375</scope>
    <source>
        <tissue>Testis</tissue>
    </source>
</reference>
<reference key="12">
    <citation type="journal article" date="2004" name="J. Cell Sci.">
        <title>Phosphorylation of CDC25B by Aurora-A at the centrosome contributes to the G2-M transition.</title>
        <authorList>
            <person name="Dutertre S."/>
            <person name="Cazales M."/>
            <person name="Quaranta M."/>
            <person name="Froment C."/>
            <person name="Trabut V."/>
            <person name="Dozier C."/>
            <person name="Mirey G."/>
            <person name="Bouche J.P."/>
            <person name="Theis-Febvre N."/>
            <person name="Schmitt E."/>
            <person name="Monsarrat B."/>
            <person name="Prigent C."/>
            <person name="Ducommun B."/>
        </authorList>
    </citation>
    <scope>SUBCELLULAR LOCATION</scope>
    <scope>PHOSPHORYLATION AT SER-353 BY AURKA</scope>
</reference>
<reference key="13">
    <citation type="journal article" date="2004" name="Nat. Cell Biol.">
        <title>Centrosome-associated Chk1 prevents premature activation of cyclin-B-Cdk1 kinase.</title>
        <authorList>
            <person name="Kraemer A."/>
            <person name="Mailand N."/>
            <person name="Lukas C."/>
            <person name="Syljuaesen R.G."/>
            <person name="Wilkinson C.J."/>
            <person name="Nigg E.A."/>
            <person name="Bartek J."/>
            <person name="Lukas J."/>
        </authorList>
    </citation>
    <scope>SUBCELLULAR LOCATION</scope>
    <scope>PHOSPHORYLATION BY CHEK1</scope>
</reference>
<reference key="14">
    <citation type="journal article" date="2005" name="Cell Cycle">
        <title>CDC25B phosphorylated by pEg3 localizes to the centrosome and the spindle poles at mitosis.</title>
        <authorList>
            <person name="Mirey G."/>
            <person name="Chartrain I."/>
            <person name="Froment C."/>
            <person name="Quaranta M."/>
            <person name="Bouche J.P."/>
            <person name="Monsarrat B."/>
            <person name="Tassan J.P."/>
            <person name="Ducommun B."/>
        </authorList>
    </citation>
    <scope>PHOSPHORYLATION AT SER-169</scope>
    <scope>SUBCELLULAR LOCATION</scope>
</reference>
<reference key="15">
    <citation type="journal article" date="2005" name="Mol. Cell">
        <title>MAPKAP kinase-2 is a cell cycle checkpoint kinase that regulates the G2/M transition and S phase progression in response to UV irradiation.</title>
        <authorList>
            <person name="Manke I.A."/>
            <person name="Nguyen A."/>
            <person name="Lim D."/>
            <person name="Stewart M.Q."/>
            <person name="Elia A.E."/>
            <person name="Yaffe M.B."/>
        </authorList>
    </citation>
    <scope>PHOSPHORYLATION AT SER-323 BY MAPKAPK2</scope>
</reference>
<reference key="16">
    <citation type="journal article" date="2007" name="EMBO J.">
        <title>Rho GTPases regulate PRK2/PKN2 to control entry into mitosis and exit from cytokinesis.</title>
        <authorList>
            <person name="Schmidt A."/>
            <person name="Durgan J."/>
            <person name="Magalhaes A."/>
            <person name="Hall A."/>
        </authorList>
    </citation>
    <scope>FUNCTION</scope>
    <scope>PHOSPHORYLATION</scope>
</reference>
<reference key="17">
    <citation type="journal article" date="2008" name="Proc. Natl. Acad. Sci. U.S.A.">
        <title>A quantitative atlas of mitotic phosphorylation.</title>
        <authorList>
            <person name="Dephoure N."/>
            <person name="Zhou C."/>
            <person name="Villen J."/>
            <person name="Beausoleil S.A."/>
            <person name="Bakalarski C.E."/>
            <person name="Elledge S.J."/>
            <person name="Gygi S.P."/>
        </authorList>
    </citation>
    <scope>IDENTIFICATION BY MASS SPECTROMETRY [LARGE SCALE ANALYSIS]</scope>
    <source>
        <tissue>Cervix carcinoma</tissue>
    </source>
</reference>
<reference key="18">
    <citation type="journal article" date="2009" name="Sci. Signal.">
        <title>Quantitative phosphoproteomic analysis of T cell receptor signaling reveals system-wide modulation of protein-protein interactions.</title>
        <authorList>
            <person name="Mayya V."/>
            <person name="Lundgren D.H."/>
            <person name="Hwang S.-I."/>
            <person name="Rezaul K."/>
            <person name="Wu L."/>
            <person name="Eng J.K."/>
            <person name="Rodionov V."/>
            <person name="Han D.K."/>
        </authorList>
    </citation>
    <scope>PHOSPHORYLATION [LARGE SCALE ANALYSIS] AT SER-249</scope>
    <scope>IDENTIFICATION BY MASS SPECTROMETRY [LARGE SCALE ANALYSIS]</scope>
    <source>
        <tissue>Leukemic T-cell</tissue>
    </source>
</reference>
<reference key="19">
    <citation type="journal article" date="2010" name="J. Biol. Chem.">
        <title>Cdc25 phosphatases are required for timely assembly of CDK1-cyclin B at the G2/M transition.</title>
        <authorList>
            <person name="Timofeev O."/>
            <person name="Cizmecioglu O."/>
            <person name="Settele F."/>
            <person name="Kempf T."/>
            <person name="Hoffmann I."/>
        </authorList>
    </citation>
    <scope>FUNCTION</scope>
</reference>
<reference key="20">
    <citation type="journal article" date="2011" name="Sci. Signal.">
        <title>System-wide temporal characterization of the proteome and phosphoproteome of human embryonic stem cell differentiation.</title>
        <authorList>
            <person name="Rigbolt K.T."/>
            <person name="Prokhorova T.A."/>
            <person name="Akimov V."/>
            <person name="Henningsen J."/>
            <person name="Johansen P.T."/>
            <person name="Kratchmarova I."/>
            <person name="Kassem M."/>
            <person name="Mann M."/>
            <person name="Olsen J.V."/>
            <person name="Blagoev B."/>
        </authorList>
    </citation>
    <scope>IDENTIFICATION BY MASS SPECTROMETRY [LARGE SCALE ANALYSIS]</scope>
</reference>
<reference key="21">
    <citation type="journal article" date="2013" name="J. Proteome Res.">
        <title>Toward a comprehensive characterization of a human cancer cell phosphoproteome.</title>
        <authorList>
            <person name="Zhou H."/>
            <person name="Di Palma S."/>
            <person name="Preisinger C."/>
            <person name="Peng M."/>
            <person name="Polat A.N."/>
            <person name="Heck A.J."/>
            <person name="Mohammed S."/>
        </authorList>
    </citation>
    <scope>PHOSPHORYLATION [LARGE SCALE ANALYSIS] AT SER-249; SER-323; SER-353; SER-375; SER-470 AND SER-563</scope>
    <scope>IDENTIFICATION BY MASS SPECTROMETRY [LARGE SCALE ANALYSIS]</scope>
    <source>
        <tissue>Cervix carcinoma</tissue>
        <tissue>Erythroleukemia</tissue>
    </source>
</reference>
<reference key="22">
    <citation type="journal article" date="1999" name="J. Mol. Biol.">
        <title>Crystal structure of the catalytic subunit of Cdc25B required for G2/M phase transition of the cell cycle.</title>
        <authorList>
            <person name="Reynolds R.A."/>
            <person name="Yem A.W."/>
            <person name="Wolfe C.L."/>
            <person name="Deibel M.R. Jr."/>
            <person name="Chidester C.G."/>
            <person name="Watenpaugh K.D."/>
        </authorList>
    </citation>
    <scope>X-RAY CRYSTALLOGRAPHY (1.91 ANGSTROMS) OF 370-580</scope>
</reference>
<evidence type="ECO:0000250" key="1">
    <source>
        <dbReference type="UniProtKB" id="P48966"/>
    </source>
</evidence>
<evidence type="ECO:0000255" key="2">
    <source>
        <dbReference type="PROSITE-ProRule" id="PRU00173"/>
    </source>
</evidence>
<evidence type="ECO:0000256" key="3">
    <source>
        <dbReference type="SAM" id="MobiDB-lite"/>
    </source>
</evidence>
<evidence type="ECO:0000269" key="4">
    <source>
    </source>
</evidence>
<evidence type="ECO:0000269" key="5">
    <source>
    </source>
</evidence>
<evidence type="ECO:0000269" key="6">
    <source>
    </source>
</evidence>
<evidence type="ECO:0000269" key="7">
    <source>
    </source>
</evidence>
<evidence type="ECO:0000269" key="8">
    <source>
    </source>
</evidence>
<evidence type="ECO:0000269" key="9">
    <source>
    </source>
</evidence>
<evidence type="ECO:0000269" key="10">
    <source>
    </source>
</evidence>
<evidence type="ECO:0000269" key="11">
    <source>
    </source>
</evidence>
<evidence type="ECO:0000269" key="12">
    <source>
    </source>
</evidence>
<evidence type="ECO:0000269" key="13">
    <source>
    </source>
</evidence>
<evidence type="ECO:0000269" key="14">
    <source ref="4"/>
</evidence>
<evidence type="ECO:0000303" key="15">
    <source>
    </source>
</evidence>
<evidence type="ECO:0000303" key="16">
    <source>
    </source>
</evidence>
<evidence type="ECO:0000303" key="17">
    <source>
    </source>
</evidence>
<evidence type="ECO:0000305" key="18"/>
<evidence type="ECO:0000305" key="19">
    <source>
    </source>
</evidence>
<evidence type="ECO:0007744" key="20">
    <source>
    </source>
</evidence>
<evidence type="ECO:0007744" key="21">
    <source>
    </source>
</evidence>
<evidence type="ECO:0007829" key="22">
    <source>
        <dbReference type="PDB" id="2A2K"/>
    </source>
</evidence>
<evidence type="ECO:0007829" key="23">
    <source>
        <dbReference type="PDB" id="4WH9"/>
    </source>
</evidence>
<organism>
    <name type="scientific">Homo sapiens</name>
    <name type="common">Human</name>
    <dbReference type="NCBI Taxonomy" id="9606"/>
    <lineage>
        <taxon>Eukaryota</taxon>
        <taxon>Metazoa</taxon>
        <taxon>Chordata</taxon>
        <taxon>Craniata</taxon>
        <taxon>Vertebrata</taxon>
        <taxon>Euteleostomi</taxon>
        <taxon>Mammalia</taxon>
        <taxon>Eutheria</taxon>
        <taxon>Euarchontoglires</taxon>
        <taxon>Primates</taxon>
        <taxon>Haplorrhini</taxon>
        <taxon>Catarrhini</taxon>
        <taxon>Hominidae</taxon>
        <taxon>Homo</taxon>
    </lineage>
</organism>
<dbReference type="EC" id="3.1.3.48" evidence="19"/>
<dbReference type="EMBL" id="M81934">
    <property type="protein sequence ID" value="AAA58416.1"/>
    <property type="molecule type" value="mRNA"/>
</dbReference>
<dbReference type="EMBL" id="S78187">
    <property type="protein sequence ID" value="AAB21139.1"/>
    <property type="molecule type" value="mRNA"/>
</dbReference>
<dbReference type="EMBL" id="X96436">
    <property type="protein sequence ID" value="CAA65303.1"/>
    <property type="molecule type" value="Genomic_DNA"/>
</dbReference>
<dbReference type="EMBL" id="Z68092">
    <property type="protein sequence ID" value="CAA92108.1"/>
    <property type="molecule type" value="mRNA"/>
</dbReference>
<dbReference type="EMBL" id="AY494082">
    <property type="protein sequence ID" value="AAR26469.1"/>
    <property type="molecule type" value="Genomic_DNA"/>
</dbReference>
<dbReference type="EMBL" id="AL109804">
    <property type="status" value="NOT_ANNOTATED_CDS"/>
    <property type="molecule type" value="Genomic_DNA"/>
</dbReference>
<dbReference type="EMBL" id="CH471133">
    <property type="protein sequence ID" value="EAX10491.1"/>
    <property type="molecule type" value="Genomic_DNA"/>
</dbReference>
<dbReference type="EMBL" id="CH471133">
    <property type="protein sequence ID" value="EAX10492.1"/>
    <property type="molecule type" value="Genomic_DNA"/>
</dbReference>
<dbReference type="EMBL" id="CH471133">
    <property type="protein sequence ID" value="EAX10493.1"/>
    <property type="molecule type" value="Genomic_DNA"/>
</dbReference>
<dbReference type="EMBL" id="CH471133">
    <property type="protein sequence ID" value="EAX10494.1"/>
    <property type="molecule type" value="Genomic_DNA"/>
</dbReference>
<dbReference type="EMBL" id="CH471133">
    <property type="protein sequence ID" value="EAX10496.1"/>
    <property type="molecule type" value="Genomic_DNA"/>
</dbReference>
<dbReference type="EMBL" id="CH471133">
    <property type="protein sequence ID" value="EAX10497.1"/>
    <property type="molecule type" value="Genomic_DNA"/>
</dbReference>
<dbReference type="EMBL" id="CH471133">
    <property type="protein sequence ID" value="EAX10498.1"/>
    <property type="molecule type" value="Genomic_DNA"/>
</dbReference>
<dbReference type="EMBL" id="CH471133">
    <property type="protein sequence ID" value="EAX10499.1"/>
    <property type="molecule type" value="Genomic_DNA"/>
</dbReference>
<dbReference type="EMBL" id="BC006395">
    <property type="protein sequence ID" value="AAH06395.1"/>
    <property type="molecule type" value="mRNA"/>
</dbReference>
<dbReference type="EMBL" id="BC009953">
    <property type="protein sequence ID" value="AAH09953.1"/>
    <property type="molecule type" value="mRNA"/>
</dbReference>
<dbReference type="EMBL" id="BC051711">
    <property type="protein sequence ID" value="AAH51711.1"/>
    <property type="molecule type" value="mRNA"/>
</dbReference>
<dbReference type="EMBL" id="AF036233">
    <property type="protein sequence ID" value="AAB94622.1"/>
    <property type="molecule type" value="Genomic_DNA"/>
</dbReference>
<dbReference type="EMBL" id="AF036233">
    <property type="protein sequence ID" value="AAB94624.1"/>
    <property type="molecule type" value="Genomic_DNA"/>
</dbReference>
<dbReference type="CCDS" id="CCDS13065.1">
    <molecule id="P30305-2"/>
</dbReference>
<dbReference type="CCDS" id="CCDS13066.1">
    <molecule id="P30305-3"/>
</dbReference>
<dbReference type="CCDS" id="CCDS13067.1">
    <molecule id="P30305-1"/>
</dbReference>
<dbReference type="PIR" id="B41648">
    <property type="entry name" value="B41648"/>
</dbReference>
<dbReference type="RefSeq" id="NP_001274448.1">
    <property type="nucleotide sequence ID" value="NM_001287519.1"/>
</dbReference>
<dbReference type="RefSeq" id="NP_001274453.1">
    <property type="nucleotide sequence ID" value="NM_001287524.1"/>
</dbReference>
<dbReference type="RefSeq" id="NP_004349.1">
    <molecule id="P30305-2"/>
    <property type="nucleotide sequence ID" value="NM_004358.5"/>
</dbReference>
<dbReference type="RefSeq" id="NP_068658.1">
    <molecule id="P30305-3"/>
    <property type="nucleotide sequence ID" value="NM_021872.4"/>
</dbReference>
<dbReference type="RefSeq" id="NP_068659.1">
    <molecule id="P30305-1"/>
    <property type="nucleotide sequence ID" value="NM_021873.4"/>
</dbReference>
<dbReference type="PDB" id="1CWR">
    <property type="method" value="X-ray"/>
    <property type="resolution" value="2.10 A"/>
    <property type="chains" value="A=370-580"/>
</dbReference>
<dbReference type="PDB" id="1CWS">
    <property type="method" value="X-ray"/>
    <property type="resolution" value="2.00 A"/>
    <property type="chains" value="A=370-580"/>
</dbReference>
<dbReference type="PDB" id="1CWT">
    <property type="method" value="X-ray"/>
    <property type="resolution" value="2.30 A"/>
    <property type="chains" value="A=388-565"/>
</dbReference>
<dbReference type="PDB" id="1QB0">
    <property type="method" value="X-ray"/>
    <property type="resolution" value="1.91 A"/>
    <property type="chains" value="A=370-580"/>
</dbReference>
<dbReference type="PDB" id="1YM9">
    <property type="method" value="X-ray"/>
    <property type="resolution" value="2.00 A"/>
    <property type="chains" value="A=391-564"/>
</dbReference>
<dbReference type="PDB" id="1YMD">
    <property type="method" value="X-ray"/>
    <property type="resolution" value="1.70 A"/>
    <property type="chains" value="A=391-564"/>
</dbReference>
<dbReference type="PDB" id="1YMK">
    <property type="method" value="X-ray"/>
    <property type="resolution" value="1.70 A"/>
    <property type="chains" value="A=391-564"/>
</dbReference>
<dbReference type="PDB" id="1YML">
    <property type="method" value="X-ray"/>
    <property type="resolution" value="1.70 A"/>
    <property type="chains" value="A=391-564"/>
</dbReference>
<dbReference type="PDB" id="1YS0">
    <property type="method" value="X-ray"/>
    <property type="resolution" value="2.00 A"/>
    <property type="chains" value="A=391-564"/>
</dbReference>
<dbReference type="PDB" id="2A2K">
    <property type="method" value="X-ray"/>
    <property type="resolution" value="1.52 A"/>
    <property type="chains" value="A=391-564"/>
</dbReference>
<dbReference type="PDB" id="2IFD">
    <property type="method" value="X-ray"/>
    <property type="resolution" value="2.00 A"/>
    <property type="chains" value="A=391-564"/>
</dbReference>
<dbReference type="PDB" id="2IFV">
    <property type="method" value="X-ray"/>
    <property type="resolution" value="1.60 A"/>
    <property type="chains" value="A=391-564"/>
</dbReference>
<dbReference type="PDB" id="2UZQ">
    <property type="method" value="X-ray"/>
    <property type="resolution" value="2.38 A"/>
    <property type="chains" value="A/B/C/D/E/F=391-580"/>
</dbReference>
<dbReference type="PDB" id="3FQT">
    <property type="method" value="X-ray"/>
    <property type="resolution" value="1.80 A"/>
    <property type="chains" value="C=38-46"/>
</dbReference>
<dbReference type="PDB" id="3FQU">
    <property type="method" value="X-ray"/>
    <property type="resolution" value="1.80 A"/>
    <property type="chains" value="C=38-46"/>
</dbReference>
<dbReference type="PDB" id="4WH7">
    <property type="method" value="X-ray"/>
    <property type="resolution" value="1.62 A"/>
    <property type="chains" value="A=386-565"/>
</dbReference>
<dbReference type="PDB" id="4WH9">
    <property type="method" value="X-ray"/>
    <property type="resolution" value="1.50 A"/>
    <property type="chains" value="A=386-565"/>
</dbReference>
<dbReference type="PDBsum" id="1CWR"/>
<dbReference type="PDBsum" id="1CWS"/>
<dbReference type="PDBsum" id="1CWT"/>
<dbReference type="PDBsum" id="1QB0"/>
<dbReference type="PDBsum" id="1YM9"/>
<dbReference type="PDBsum" id="1YMD"/>
<dbReference type="PDBsum" id="1YMK"/>
<dbReference type="PDBsum" id="1YML"/>
<dbReference type="PDBsum" id="1YS0"/>
<dbReference type="PDBsum" id="2A2K"/>
<dbReference type="PDBsum" id="2IFD"/>
<dbReference type="PDBsum" id="2IFV"/>
<dbReference type="PDBsum" id="2UZQ"/>
<dbReference type="PDBsum" id="3FQT"/>
<dbReference type="PDBsum" id="3FQU"/>
<dbReference type="PDBsum" id="4WH7"/>
<dbReference type="PDBsum" id="4WH9"/>
<dbReference type="SMR" id="P30305"/>
<dbReference type="BioGRID" id="107429">
    <property type="interactions" value="132"/>
</dbReference>
<dbReference type="CORUM" id="P30305"/>
<dbReference type="DIP" id="DIP-323N"/>
<dbReference type="ELM" id="P30305"/>
<dbReference type="FunCoup" id="P30305">
    <property type="interactions" value="1723"/>
</dbReference>
<dbReference type="IntAct" id="P30305">
    <property type="interactions" value="21"/>
</dbReference>
<dbReference type="MINT" id="P30305"/>
<dbReference type="STRING" id="9606.ENSP00000245960"/>
<dbReference type="BindingDB" id="P30305"/>
<dbReference type="ChEMBL" id="CHEMBL4804"/>
<dbReference type="DrugBank" id="DB03661">
    <property type="generic name" value="L-cysteic acid"/>
</dbReference>
<dbReference type="DrugBank" id="DB03345">
    <property type="generic name" value="Mercaptoethanol"/>
</dbReference>
<dbReference type="DrugBank" id="DB01915">
    <property type="generic name" value="S-Hydroxycysteine"/>
</dbReference>
<dbReference type="DrugCentral" id="P30305"/>
<dbReference type="DEPOD" id="CDC25B"/>
<dbReference type="GlyGen" id="P30305">
    <property type="glycosylation" value="2 sites, 1 O-linked glycan (1 site)"/>
</dbReference>
<dbReference type="iPTMnet" id="P30305"/>
<dbReference type="PhosphoSitePlus" id="P30305"/>
<dbReference type="BioMuta" id="CDC25B"/>
<dbReference type="DMDM" id="21264471"/>
<dbReference type="CPTAC" id="CPTAC-1253"/>
<dbReference type="CPTAC" id="CPTAC-1254"/>
<dbReference type="CPTAC" id="CPTAC-5903"/>
<dbReference type="CPTAC" id="CPTAC-5904"/>
<dbReference type="CPTAC" id="CPTAC-5905"/>
<dbReference type="jPOST" id="P30305"/>
<dbReference type="MassIVE" id="P30305"/>
<dbReference type="PaxDb" id="9606-ENSP00000245960"/>
<dbReference type="PeptideAtlas" id="P30305"/>
<dbReference type="ProteomicsDB" id="54654">
    <molecule id="P30305-1"/>
</dbReference>
<dbReference type="ProteomicsDB" id="54655">
    <molecule id="P30305-2"/>
</dbReference>
<dbReference type="ProteomicsDB" id="54656">
    <molecule id="P30305-3"/>
</dbReference>
<dbReference type="ProteomicsDB" id="54657">
    <molecule id="P30305-4"/>
</dbReference>
<dbReference type="Pumba" id="P30305"/>
<dbReference type="Antibodypedia" id="3625">
    <property type="antibodies" value="952 antibodies from 40 providers"/>
</dbReference>
<dbReference type="CPTC" id="P30305">
    <property type="antibodies" value="2 antibodies"/>
</dbReference>
<dbReference type="DNASU" id="994"/>
<dbReference type="Ensembl" id="ENST00000245960.10">
    <molecule id="P30305-1"/>
    <property type="protein sequence ID" value="ENSP00000245960.5"/>
    <property type="gene ID" value="ENSG00000101224.18"/>
</dbReference>
<dbReference type="Ensembl" id="ENST00000340833.4">
    <molecule id="P30305-3"/>
    <property type="protein sequence ID" value="ENSP00000339170.4"/>
    <property type="gene ID" value="ENSG00000101224.18"/>
</dbReference>
<dbReference type="Ensembl" id="ENST00000439880.6">
    <molecule id="P30305-2"/>
    <property type="protein sequence ID" value="ENSP00000405972.2"/>
    <property type="gene ID" value="ENSG00000101224.18"/>
</dbReference>
<dbReference type="GeneID" id="994"/>
<dbReference type="KEGG" id="hsa:994"/>
<dbReference type="MANE-Select" id="ENST00000245960.10">
    <property type="protein sequence ID" value="ENSP00000245960.5"/>
    <property type="RefSeq nucleotide sequence ID" value="NM_021873.4"/>
    <property type="RefSeq protein sequence ID" value="NP_068659.1"/>
</dbReference>
<dbReference type="UCSC" id="uc002wjn.5">
    <molecule id="P30305-1"/>
    <property type="organism name" value="human"/>
</dbReference>
<dbReference type="AGR" id="HGNC:1726"/>
<dbReference type="CTD" id="994"/>
<dbReference type="DisGeNET" id="994"/>
<dbReference type="GeneCards" id="CDC25B"/>
<dbReference type="HGNC" id="HGNC:1726">
    <property type="gene designation" value="CDC25B"/>
</dbReference>
<dbReference type="HPA" id="ENSG00000101224">
    <property type="expression patterns" value="Low tissue specificity"/>
</dbReference>
<dbReference type="MIM" id="116949">
    <property type="type" value="gene"/>
</dbReference>
<dbReference type="neXtProt" id="NX_P30305"/>
<dbReference type="OpenTargets" id="ENSG00000101224"/>
<dbReference type="PharmGKB" id="PA26260"/>
<dbReference type="VEuPathDB" id="HostDB:ENSG00000101224"/>
<dbReference type="eggNOG" id="KOG3772">
    <property type="taxonomic scope" value="Eukaryota"/>
</dbReference>
<dbReference type="GeneTree" id="ENSGT00940000158524"/>
<dbReference type="InParanoid" id="P30305"/>
<dbReference type="OMA" id="MHSKCRR"/>
<dbReference type="OrthoDB" id="26523at2759"/>
<dbReference type="PAN-GO" id="P30305">
    <property type="GO annotations" value="6 GO annotations based on evolutionary models"/>
</dbReference>
<dbReference type="PhylomeDB" id="P30305"/>
<dbReference type="TreeFam" id="TF101056"/>
<dbReference type="BRENDA" id="3.1.3.48">
    <property type="organism ID" value="2681"/>
</dbReference>
<dbReference type="PathwayCommons" id="P30305"/>
<dbReference type="Reactome" id="R-HSA-69273">
    <property type="pathway name" value="Cyclin A/B1/B2 associated events during G2/M transition"/>
</dbReference>
<dbReference type="Reactome" id="R-HSA-69656">
    <property type="pathway name" value="Cyclin A:Cdk2-associated events at S phase entry"/>
</dbReference>
<dbReference type="Reactome" id="R-HSA-8862803">
    <property type="pathway name" value="Deregulated CDK5 triggers multiple neurodegenerative pathways in Alzheimer's disease models"/>
</dbReference>
<dbReference type="Reactome" id="R-HSA-9825892">
    <property type="pathway name" value="Regulation of MITF-M-dependent genes involved in cell cycle and proliferation"/>
</dbReference>
<dbReference type="SignaLink" id="P30305"/>
<dbReference type="SIGNOR" id="P30305"/>
<dbReference type="BioGRID-ORCS" id="994">
    <property type="hits" value="156 hits in 1183 CRISPR screens"/>
</dbReference>
<dbReference type="CD-CODE" id="8C2F96ED">
    <property type="entry name" value="Centrosome"/>
</dbReference>
<dbReference type="ChiTaRS" id="CDC25B">
    <property type="organism name" value="human"/>
</dbReference>
<dbReference type="EvolutionaryTrace" id="P30305"/>
<dbReference type="GeneWiki" id="CDC25B"/>
<dbReference type="GenomeRNAi" id="994"/>
<dbReference type="Pharos" id="P30305">
    <property type="development level" value="Tchem"/>
</dbReference>
<dbReference type="PRO" id="PR:P30305"/>
<dbReference type="Proteomes" id="UP000005640">
    <property type="component" value="Chromosome 20"/>
</dbReference>
<dbReference type="RNAct" id="P30305">
    <property type="molecule type" value="protein"/>
</dbReference>
<dbReference type="Bgee" id="ENSG00000101224">
    <property type="expression patterns" value="Expressed in granulocyte and 193 other cell types or tissues"/>
</dbReference>
<dbReference type="ExpressionAtlas" id="P30305">
    <property type="expression patterns" value="baseline and differential"/>
</dbReference>
<dbReference type="GO" id="GO:0005813">
    <property type="term" value="C:centrosome"/>
    <property type="evidence" value="ECO:0000314"/>
    <property type="project" value="UniProtKB"/>
</dbReference>
<dbReference type="GO" id="GO:0005737">
    <property type="term" value="C:cytoplasm"/>
    <property type="evidence" value="ECO:0000318"/>
    <property type="project" value="GO_Central"/>
</dbReference>
<dbReference type="GO" id="GO:0005829">
    <property type="term" value="C:cytosol"/>
    <property type="evidence" value="ECO:0000304"/>
    <property type="project" value="Reactome"/>
</dbReference>
<dbReference type="GO" id="GO:0005654">
    <property type="term" value="C:nucleoplasm"/>
    <property type="evidence" value="ECO:0000304"/>
    <property type="project" value="Reactome"/>
</dbReference>
<dbReference type="GO" id="GO:0005634">
    <property type="term" value="C:nucleus"/>
    <property type="evidence" value="ECO:0000318"/>
    <property type="project" value="GO_Central"/>
</dbReference>
<dbReference type="GO" id="GO:0000922">
    <property type="term" value="C:spindle pole"/>
    <property type="evidence" value="ECO:0000314"/>
    <property type="project" value="UniProtKB"/>
</dbReference>
<dbReference type="GO" id="GO:0004721">
    <property type="term" value="F:phosphoprotein phosphatase activity"/>
    <property type="evidence" value="ECO:0000314"/>
    <property type="project" value="UniProtKB"/>
</dbReference>
<dbReference type="GO" id="GO:0019901">
    <property type="term" value="F:protein kinase binding"/>
    <property type="evidence" value="ECO:0000353"/>
    <property type="project" value="UniProtKB"/>
</dbReference>
<dbReference type="GO" id="GO:0004725">
    <property type="term" value="F:protein tyrosine phosphatase activity"/>
    <property type="evidence" value="ECO:0000318"/>
    <property type="project" value="GO_Central"/>
</dbReference>
<dbReference type="GO" id="GO:0051301">
    <property type="term" value="P:cell division"/>
    <property type="evidence" value="ECO:0007669"/>
    <property type="project" value="UniProtKB-KW"/>
</dbReference>
<dbReference type="GO" id="GO:0007144">
    <property type="term" value="P:female meiosis I"/>
    <property type="evidence" value="ECO:0007669"/>
    <property type="project" value="Ensembl"/>
</dbReference>
<dbReference type="GO" id="GO:0000086">
    <property type="term" value="P:G2/M transition of mitotic cell cycle"/>
    <property type="evidence" value="ECO:0000318"/>
    <property type="project" value="GO_Central"/>
</dbReference>
<dbReference type="GO" id="GO:0000278">
    <property type="term" value="P:mitotic cell cycle"/>
    <property type="evidence" value="ECO:0000304"/>
    <property type="project" value="UniProtKB"/>
</dbReference>
<dbReference type="GO" id="GO:0001556">
    <property type="term" value="P:oocyte maturation"/>
    <property type="evidence" value="ECO:0007669"/>
    <property type="project" value="Ensembl"/>
</dbReference>
<dbReference type="GO" id="GO:0008284">
    <property type="term" value="P:positive regulation of cell population proliferation"/>
    <property type="evidence" value="ECO:0000304"/>
    <property type="project" value="ProtInc"/>
</dbReference>
<dbReference type="GO" id="GO:0032467">
    <property type="term" value="P:positive regulation of cytokinesis"/>
    <property type="evidence" value="ECO:0000315"/>
    <property type="project" value="UniProtKB"/>
</dbReference>
<dbReference type="GO" id="GO:0010971">
    <property type="term" value="P:positive regulation of G2/M transition of mitotic cell cycle"/>
    <property type="evidence" value="ECO:0000314"/>
    <property type="project" value="UniProtKB"/>
</dbReference>
<dbReference type="GO" id="GO:0110032">
    <property type="term" value="P:positive regulation of G2/MI transition of meiotic cell cycle"/>
    <property type="evidence" value="ECO:0000318"/>
    <property type="project" value="GO_Central"/>
</dbReference>
<dbReference type="GO" id="GO:0045931">
    <property type="term" value="P:positive regulation of mitotic cell cycle"/>
    <property type="evidence" value="ECO:0000315"/>
    <property type="project" value="UniProtKB"/>
</dbReference>
<dbReference type="GO" id="GO:0006468">
    <property type="term" value="P:protein phosphorylation"/>
    <property type="evidence" value="ECO:0000314"/>
    <property type="project" value="UniProtKB"/>
</dbReference>
<dbReference type="CDD" id="cd01530">
    <property type="entry name" value="Cdc25"/>
    <property type="match status" value="1"/>
</dbReference>
<dbReference type="FunFam" id="3.40.250.10:FF:000006">
    <property type="entry name" value="M-phase inducer phosphatase 2"/>
    <property type="match status" value="1"/>
</dbReference>
<dbReference type="Gene3D" id="3.40.250.10">
    <property type="entry name" value="Rhodanese-like domain"/>
    <property type="match status" value="1"/>
</dbReference>
<dbReference type="InterPro" id="IPR000751">
    <property type="entry name" value="MPI_Phosphatase"/>
</dbReference>
<dbReference type="InterPro" id="IPR001763">
    <property type="entry name" value="Rhodanese-like_dom"/>
</dbReference>
<dbReference type="InterPro" id="IPR036873">
    <property type="entry name" value="Rhodanese-like_dom_sf"/>
</dbReference>
<dbReference type="PANTHER" id="PTHR10828:SF48">
    <property type="entry name" value="M-PHASE INDUCER PHOSPHATASE 2"/>
    <property type="match status" value="1"/>
</dbReference>
<dbReference type="PANTHER" id="PTHR10828">
    <property type="entry name" value="M-PHASE INDUCER PHOSPHATASE DUAL SPECIFICITY PHOSPHATASE CDC25"/>
    <property type="match status" value="1"/>
</dbReference>
<dbReference type="Pfam" id="PF06617">
    <property type="entry name" value="M-inducer_phosp"/>
    <property type="match status" value="1"/>
</dbReference>
<dbReference type="Pfam" id="PF00581">
    <property type="entry name" value="Rhodanese"/>
    <property type="match status" value="1"/>
</dbReference>
<dbReference type="PRINTS" id="PR00716">
    <property type="entry name" value="MPIPHPHTASE"/>
</dbReference>
<dbReference type="SMART" id="SM00450">
    <property type="entry name" value="RHOD"/>
    <property type="match status" value="1"/>
</dbReference>
<dbReference type="SUPFAM" id="SSF52821">
    <property type="entry name" value="Rhodanese/Cell cycle control phosphatase"/>
    <property type="match status" value="1"/>
</dbReference>
<dbReference type="PROSITE" id="PS50206">
    <property type="entry name" value="RHODANESE_3"/>
    <property type="match status" value="1"/>
</dbReference>
<comment type="function">
    <text evidence="11 12 13">Tyrosine protein phosphatase which functions as a dosage-dependent inducer of mitotic progression (PubMed:1836978, PubMed:20360007). Directly dephosphorylates CDK1 and stimulates its kinase activity (PubMed:20360007). Required for G2/M phases of the cell cycle progression and abscission during cytokinesis in a ECT2-dependent manner (PubMed:17332740). The three isoforms seem to have a different level of activity (PubMed:1836978).</text>
</comment>
<comment type="catalytic activity">
    <reaction evidence="19">
        <text>O-phospho-L-tyrosyl-[protein] + H2O = L-tyrosyl-[protein] + phosphate</text>
        <dbReference type="Rhea" id="RHEA:10684"/>
        <dbReference type="Rhea" id="RHEA-COMP:10136"/>
        <dbReference type="Rhea" id="RHEA-COMP:20101"/>
        <dbReference type="ChEBI" id="CHEBI:15377"/>
        <dbReference type="ChEBI" id="CHEBI:43474"/>
        <dbReference type="ChEBI" id="CHEBI:46858"/>
        <dbReference type="ChEBI" id="CHEBI:61978"/>
        <dbReference type="EC" id="3.1.3.48"/>
    </reaction>
    <physiologicalReaction direction="left-to-right" evidence="19">
        <dbReference type="Rhea" id="RHEA:10685"/>
    </physiologicalReaction>
</comment>
<comment type="activity regulation">
    <text evidence="12">Stimulated by B-type cyclins.</text>
</comment>
<comment type="subunit">
    <text evidence="4">Interacts with MAPK14 and 14-3-3 proteins.</text>
</comment>
<comment type="interaction">
    <interactant intactId="EBI-1051746">
        <id>P30305</id>
    </interactant>
    <interactant intactId="EBI-355546">
        <id>P61289</id>
        <label>PSME3</label>
    </interactant>
    <organismsDiffer>false</organismsDiffer>
    <experiments>3</experiments>
</comment>
<comment type="interaction">
    <interactant intactId="EBI-1051746">
        <id>P30305</id>
    </interactant>
    <interactant intactId="EBI-476295">
        <id>P31947</id>
        <label>SFN</label>
    </interactant>
    <organismsDiffer>false</organismsDiffer>
    <experiments>2</experiments>
</comment>
<comment type="interaction">
    <interactant intactId="EBI-1051746">
        <id>P30305</id>
    </interactant>
    <interactant intactId="EBI-359815">
        <id>P31946</id>
        <label>YWHAB</label>
    </interactant>
    <organismsDiffer>false</organismsDiffer>
    <experiments>6</experiments>
</comment>
<comment type="interaction">
    <interactant intactId="EBI-1051746">
        <id>P30305</id>
    </interactant>
    <interactant intactId="EBI-356498">
        <id>P62258</id>
        <label>YWHAE</label>
    </interactant>
    <organismsDiffer>false</organismsDiffer>
    <experiments>5</experiments>
</comment>
<comment type="interaction">
    <interactant intactId="EBI-1051746">
        <id>P30305</id>
    </interactant>
    <interactant intactId="EBI-359832">
        <id>P61981</id>
        <label>YWHAG</label>
    </interactant>
    <organismsDiffer>false</organismsDiffer>
    <experiments>5</experiments>
</comment>
<comment type="interaction">
    <interactant intactId="EBI-1051746">
        <id>P30305</id>
    </interactant>
    <interactant intactId="EBI-306940">
        <id>Q04917</id>
        <label>YWHAH</label>
    </interactant>
    <organismsDiffer>false</organismsDiffer>
    <experiments>7</experiments>
</comment>
<comment type="interaction">
    <interactant intactId="EBI-1051746">
        <id>P30305</id>
    </interactant>
    <interactant intactId="EBI-347088">
        <id>P63104</id>
        <label>YWHAZ</label>
    </interactant>
    <organismsDiffer>false</organismsDiffer>
    <experiments>9</experiments>
</comment>
<comment type="subcellular location">
    <subcellularLocation>
        <location evidence="6 8 10">Cytoplasm</location>
        <location evidence="6 8 10">Cytoskeleton</location>
        <location evidence="6 8 10">Microtubule organizing center</location>
        <location evidence="6 8 10">Centrosome</location>
    </subcellularLocation>
    <subcellularLocation>
        <location evidence="10">Cytoplasm</location>
        <location evidence="10">Cytoskeleton</location>
        <location evidence="10">Spindle pole</location>
    </subcellularLocation>
</comment>
<comment type="alternative products">
    <event type="alternative splicing"/>
    <isoform>
        <id>P30305-1</id>
        <name>3</name>
        <name>CDC25B3</name>
        <sequence type="displayed"/>
    </isoform>
    <isoform>
        <id>P30305-2</id>
        <name>1</name>
        <name>CDC25B1</name>
        <sequence type="described" ref="VSP_000861"/>
    </isoform>
    <isoform>
        <id>P30305-3</id>
        <name>2</name>
        <name>CDC25B2</name>
        <sequence type="described" ref="VSP_000862"/>
    </isoform>
    <isoform>
        <id>P30305-4</id>
        <name>4</name>
        <sequence type="described" ref="VSP_000861 VSP_012587"/>
    </isoform>
</comment>
<comment type="PTM">
    <text evidence="4 5 6 7 8 9 10 11">Phosphorylated by BRSK1 in vitro. Phosphorylated by CHEK1, which inhibits the activity of this protein. Phosphorylation at Ser-353 by AURKA might locally participate in the control of the onset of mitosis. Phosphorylation by MELK at Ser-169 promotes localization to the centrosome and the spindle poles during mitosis. Phosphorylation at Ser-323 and Ser-375 by MAPK14 is required for binding to 14-3-3 proteins.</text>
</comment>
<comment type="similarity">
    <text evidence="18">Belongs to the MPI phosphatase family.</text>
</comment>
<sequence length="580" mass="64987">MEVPQPEPAPGSALSPAGVCGGAQRPGHLPGLLLGSHGLLGSPVRAAASSPVTTLTQTMHDLAGLGSETPKSQVGTLLFRSRSRLTHLSLSRRASESSLSSESSESSDAGLCMDSPSPMDPHMAEQTFEQAIQAASRIIRNEQFAIRRFQSMPVRLLGHSPVLRNITNSQAPDGRRKSEAGSGAASSSGEDKENDGFVFKMPWKPTHPSSTHALAEWASRREAFAQRPSSAPDLMCLSPDRKMEVEELSPLALGRFSLTPAEGDTEEDDGFVDILESDLKDDDAVPPGMESLISAPLVKTLEKEEEKDLVMYSKCQRLFRSPSMPCSVIRPILKRLERPQDRDTPVQNKRRRSVTPPEEQQEAEEPKARVLRSKSLCHDEIENLLDSDHRELIGDYSKAFLLQTVDGKHQDLKYISPETMVALLTGKFSNIVDKFVIVDCRYPYEYEGGHIKTAVNLPLERDAESFLLKSPIAPCSLDKRVILIFHCEFSSERGPRMCRFIRERDRAVNDYPSLYYPEMYILKGGYKEFFPQHPNFCEPQDYRPMNHEAFKDELKTFRLKTRSWAGERSRRELCSRLQDQ</sequence>